<proteinExistence type="inferred from homology"/>
<organism>
    <name type="scientific">Salmonella paratyphi B (strain ATCC BAA-1250 / SPB7)</name>
    <dbReference type="NCBI Taxonomy" id="1016998"/>
    <lineage>
        <taxon>Bacteria</taxon>
        <taxon>Pseudomonadati</taxon>
        <taxon>Pseudomonadota</taxon>
        <taxon>Gammaproteobacteria</taxon>
        <taxon>Enterobacterales</taxon>
        <taxon>Enterobacteriaceae</taxon>
        <taxon>Salmonella</taxon>
    </lineage>
</organism>
<name>NCPP_SALPB</name>
<evidence type="ECO:0000255" key="1">
    <source>
        <dbReference type="HAMAP-Rule" id="MF_00648"/>
    </source>
</evidence>
<keyword id="KW-0378">Hydrolase</keyword>
<keyword id="KW-0460">Magnesium</keyword>
<keyword id="KW-0464">Manganese</keyword>
<keyword id="KW-0479">Metal-binding</keyword>
<keyword id="KW-0546">Nucleotide metabolism</keyword>
<keyword id="KW-0547">Nucleotide-binding</keyword>
<protein>
    <recommendedName>
        <fullName evidence="1">Inosine/xanthosine triphosphatase</fullName>
        <shortName evidence="1">ITPase/XTPase</shortName>
        <ecNumber evidence="1">3.6.1.73</ecNumber>
    </recommendedName>
    <alternativeName>
        <fullName evidence="1">Non-canonical purine NTP phosphatase</fullName>
    </alternativeName>
    <alternativeName>
        <fullName evidence="1">Non-standard purine NTP phosphatase</fullName>
    </alternativeName>
    <alternativeName>
        <fullName evidence="1">Nucleoside-triphosphate phosphatase</fullName>
        <shortName evidence="1">NTPase</shortName>
    </alternativeName>
</protein>
<comment type="function">
    <text evidence="1">Phosphatase that hydrolyzes non-canonical purine nucleotides such as XTP and ITP to their respective diphosphate derivatives. Probably excludes non-canonical purines from DNA/RNA precursor pool, thus preventing their incorporation into DNA/RNA and avoiding chromosomal lesions.</text>
</comment>
<comment type="catalytic activity">
    <reaction evidence="1">
        <text>XTP + H2O = XDP + phosphate + H(+)</text>
        <dbReference type="Rhea" id="RHEA:28406"/>
        <dbReference type="ChEBI" id="CHEBI:15377"/>
        <dbReference type="ChEBI" id="CHEBI:15378"/>
        <dbReference type="ChEBI" id="CHEBI:43474"/>
        <dbReference type="ChEBI" id="CHEBI:59884"/>
        <dbReference type="ChEBI" id="CHEBI:61314"/>
        <dbReference type="EC" id="3.6.1.73"/>
    </reaction>
</comment>
<comment type="catalytic activity">
    <reaction evidence="1">
        <text>ITP + H2O = IDP + phosphate + H(+)</text>
        <dbReference type="Rhea" id="RHEA:28330"/>
        <dbReference type="ChEBI" id="CHEBI:15377"/>
        <dbReference type="ChEBI" id="CHEBI:15378"/>
        <dbReference type="ChEBI" id="CHEBI:43474"/>
        <dbReference type="ChEBI" id="CHEBI:58280"/>
        <dbReference type="ChEBI" id="CHEBI:61402"/>
        <dbReference type="EC" id="3.6.1.73"/>
    </reaction>
</comment>
<comment type="cofactor">
    <cofactor evidence="1">
        <name>Mg(2+)</name>
        <dbReference type="ChEBI" id="CHEBI:18420"/>
    </cofactor>
    <cofactor evidence="1">
        <name>Mn(2+)</name>
        <dbReference type="ChEBI" id="CHEBI:29035"/>
    </cofactor>
    <text evidence="1">Binds 1 divalent metal cation per subunit; can use either Mg(2+) or Mn(2+).</text>
</comment>
<comment type="subunit">
    <text evidence="1">Homodimer.</text>
</comment>
<comment type="similarity">
    <text evidence="1">Belongs to the YjjX NTPase family.</text>
</comment>
<sequence>MHQVISATTNPAKIQAILQAFEEIFGEGSCHITPVAVESGVPEQPFGSEETRAGARNRVDNAQRLHPQADFWVAIEAGIDDDATFSWVVIDNGVQRGEARSATLPLPAVILDRVRQGEALGPVMSHYTGIDEIGRKEGAIGVFTAGKLTRSSVYYQAVILALSPFHNAVYR</sequence>
<feature type="chain" id="PRO_1000082719" description="Inosine/xanthosine triphosphatase">
    <location>
        <begin position="1"/>
        <end position="171"/>
    </location>
</feature>
<feature type="binding site" evidence="1">
    <location>
        <begin position="8"/>
        <end position="13"/>
    </location>
    <ligand>
        <name>substrate</name>
    </ligand>
</feature>
<feature type="binding site" evidence="1">
    <location>
        <position position="38"/>
    </location>
    <ligand>
        <name>Mg(2+)</name>
        <dbReference type="ChEBI" id="CHEBI:18420"/>
    </ligand>
</feature>
<feature type="binding site" evidence="1">
    <location>
        <position position="68"/>
    </location>
    <ligand>
        <name>Mg(2+)</name>
        <dbReference type="ChEBI" id="CHEBI:18420"/>
    </ligand>
</feature>
<gene>
    <name type="primary">yjjX</name>
    <name type="ordered locus">SPAB_05762</name>
</gene>
<dbReference type="EC" id="3.6.1.73" evidence="1"/>
<dbReference type="EMBL" id="CP000886">
    <property type="protein sequence ID" value="ABX71027.1"/>
    <property type="molecule type" value="Genomic_DNA"/>
</dbReference>
<dbReference type="RefSeq" id="WP_000554305.1">
    <property type="nucleotide sequence ID" value="NC_010102.1"/>
</dbReference>
<dbReference type="SMR" id="A9N7F4"/>
<dbReference type="KEGG" id="spq:SPAB_05762"/>
<dbReference type="PATRIC" id="fig|1016998.12.peg.5399"/>
<dbReference type="HOGENOM" id="CLU_087417_1_0_6"/>
<dbReference type="BioCyc" id="SENT1016998:SPAB_RS23515-MONOMER"/>
<dbReference type="Proteomes" id="UP000008556">
    <property type="component" value="Chromosome"/>
</dbReference>
<dbReference type="GO" id="GO:0103023">
    <property type="term" value="F:ITPase activity"/>
    <property type="evidence" value="ECO:0007669"/>
    <property type="project" value="UniProtKB-EC"/>
</dbReference>
<dbReference type="GO" id="GO:0046872">
    <property type="term" value="F:metal ion binding"/>
    <property type="evidence" value="ECO:0007669"/>
    <property type="project" value="UniProtKB-KW"/>
</dbReference>
<dbReference type="GO" id="GO:0000166">
    <property type="term" value="F:nucleotide binding"/>
    <property type="evidence" value="ECO:0007669"/>
    <property type="project" value="UniProtKB-KW"/>
</dbReference>
<dbReference type="GO" id="GO:0017111">
    <property type="term" value="F:ribonucleoside triphosphate phosphatase activity"/>
    <property type="evidence" value="ECO:0000250"/>
    <property type="project" value="UniProtKB"/>
</dbReference>
<dbReference type="GO" id="GO:0009117">
    <property type="term" value="P:nucleotide metabolic process"/>
    <property type="evidence" value="ECO:0007669"/>
    <property type="project" value="UniProtKB-KW"/>
</dbReference>
<dbReference type="GO" id="GO:0006772">
    <property type="term" value="P:thiamine metabolic process"/>
    <property type="evidence" value="ECO:0007669"/>
    <property type="project" value="TreeGrafter"/>
</dbReference>
<dbReference type="FunFam" id="3.90.950.10:FF:000002">
    <property type="entry name" value="Inosine/xanthosine triphosphatase"/>
    <property type="match status" value="1"/>
</dbReference>
<dbReference type="Gene3D" id="3.90.950.10">
    <property type="match status" value="1"/>
</dbReference>
<dbReference type="HAMAP" id="MF_00648">
    <property type="entry name" value="Non_canon_purine_NTPase_YjjX"/>
    <property type="match status" value="1"/>
</dbReference>
<dbReference type="InterPro" id="IPR029001">
    <property type="entry name" value="ITPase-like_fam"/>
</dbReference>
<dbReference type="InterPro" id="IPR002786">
    <property type="entry name" value="Non_canon_purine_NTPase"/>
</dbReference>
<dbReference type="InterPro" id="IPR026533">
    <property type="entry name" value="NTPase/PRRC1"/>
</dbReference>
<dbReference type="InterPro" id="IPR050299">
    <property type="entry name" value="YjjX_NTPase"/>
</dbReference>
<dbReference type="NCBIfam" id="TIGR00258">
    <property type="entry name" value="inosine/xanthosine triphosphatase"/>
    <property type="match status" value="1"/>
</dbReference>
<dbReference type="NCBIfam" id="NF003459">
    <property type="entry name" value="PRK05074.1"/>
    <property type="match status" value="1"/>
</dbReference>
<dbReference type="PANTHER" id="PTHR34699">
    <property type="match status" value="1"/>
</dbReference>
<dbReference type="PANTHER" id="PTHR34699:SF2">
    <property type="entry name" value="NON-CANONICAL PURINE NTP PHOSPHATASE_PRRC1 DOMAIN-CONTAINING PROTEIN"/>
    <property type="match status" value="1"/>
</dbReference>
<dbReference type="Pfam" id="PF01931">
    <property type="entry name" value="NTPase_I-T"/>
    <property type="match status" value="1"/>
</dbReference>
<dbReference type="SUPFAM" id="SSF52972">
    <property type="entry name" value="ITPase-like"/>
    <property type="match status" value="1"/>
</dbReference>
<accession>A9N7F4</accession>
<reference key="1">
    <citation type="submission" date="2007-11" db="EMBL/GenBank/DDBJ databases">
        <authorList>
            <consortium name="The Salmonella enterica serovar Paratyphi B Genome Sequencing Project"/>
            <person name="McClelland M."/>
            <person name="Sanderson E.K."/>
            <person name="Porwollik S."/>
            <person name="Spieth J."/>
            <person name="Clifton W.S."/>
            <person name="Fulton R."/>
            <person name="Cordes M."/>
            <person name="Wollam A."/>
            <person name="Shah N."/>
            <person name="Pepin K."/>
            <person name="Bhonagiri V."/>
            <person name="Nash W."/>
            <person name="Johnson M."/>
            <person name="Thiruvilangam P."/>
            <person name="Wilson R."/>
        </authorList>
    </citation>
    <scope>NUCLEOTIDE SEQUENCE [LARGE SCALE GENOMIC DNA]</scope>
    <source>
        <strain>ATCC BAA-1250 / SPB7</strain>
    </source>
</reference>